<sequence>MYQTTAALRSAFLEYFRTNGHQVVDSSSLVPANDPTLLFTNAGMNQFKDVFLGADKRSYSRATSSQRCVRAGGKHNDLDNVGYTARHHTFFEMLGNFSFGDYFKEEAIHFAWTFLTEELKLPKERLCVTIYETDDEAFEIWNKKIGVAAENIIRIGDNKGAAYASDNFWQMGDTGPCGPCSEIFYDHGDHIWGGRPGTPEEDGDRFIEIWNIVFMQYNRQADGEMKPLPKPSVDTGMGIERIAAIMQGVHSNYEIDIFQALIKKTAAILGVTDLENKSLRVIADHIRSCAFLIADGVMPSNEGRGYVLRRIIRRAVRHGNKLGATESFFYKLVPTLIEVMGDAAKGLQETQAIVEKSLKAEEEQFARTLERGLGILDAALNELTTKVLDGETAFKLYDTYGFPVDLTADVCREREITVDEAGFEAAMAEQRKRAQAAGQFDTDYNEGLKIDEQSSFTGYTELNNQATVTAIFKSGEAAETITAGDEAVIVLDNTPFYGESGGQSGDKGVLIADGIEFTVIDTQKYGQAIGHIGRVVTGEIKAGQSLTANVDKKLRHRTELNHSVTHLLHAALRQVLGAHVSQKGSLVDPERLRFDFSHFEGVKANELKEVEELVNTQIRRNHELTAEVMDIETAKEKGAMALFGEKYDSEVRVVTMGDFSIELCGGTHVGRTGDIGLFKITSEGGIAAGIRRIEAVTGAAAMAYVAKQQAQLEEAATLLKGDSASVVAKLKAQLDKTKQLEKELSQLKDKLAAATSADLAGEAVEVNGVKVLVKKLEGVDAGALRGLQDELKQKLQSGIVVLAIAGEDKVNLIVGVTKDLTGKVKAGELVASIAVQVGGKGGGRPDMAQAGGSQPENLDGALEQVIPWITAKLS</sequence>
<accession>B0TK15</accession>
<name>SYA_SHEHH</name>
<protein>
    <recommendedName>
        <fullName evidence="1">Alanine--tRNA ligase</fullName>
        <ecNumber evidence="1">6.1.1.7</ecNumber>
    </recommendedName>
    <alternativeName>
        <fullName evidence="1">Alanyl-tRNA synthetase</fullName>
        <shortName evidence="1">AlaRS</shortName>
    </alternativeName>
</protein>
<gene>
    <name evidence="1" type="primary">alaS</name>
    <name type="ordered locus">Shal_1233</name>
</gene>
<comment type="function">
    <text evidence="1">Catalyzes the attachment of alanine to tRNA(Ala) in a two-step reaction: alanine is first activated by ATP to form Ala-AMP and then transferred to the acceptor end of tRNA(Ala). Also edits incorrectly charged Ser-tRNA(Ala) and Gly-tRNA(Ala) via its editing domain.</text>
</comment>
<comment type="catalytic activity">
    <reaction evidence="1">
        <text>tRNA(Ala) + L-alanine + ATP = L-alanyl-tRNA(Ala) + AMP + diphosphate</text>
        <dbReference type="Rhea" id="RHEA:12540"/>
        <dbReference type="Rhea" id="RHEA-COMP:9657"/>
        <dbReference type="Rhea" id="RHEA-COMP:9923"/>
        <dbReference type="ChEBI" id="CHEBI:30616"/>
        <dbReference type="ChEBI" id="CHEBI:33019"/>
        <dbReference type="ChEBI" id="CHEBI:57972"/>
        <dbReference type="ChEBI" id="CHEBI:78442"/>
        <dbReference type="ChEBI" id="CHEBI:78497"/>
        <dbReference type="ChEBI" id="CHEBI:456215"/>
        <dbReference type="EC" id="6.1.1.7"/>
    </reaction>
</comment>
<comment type="cofactor">
    <cofactor evidence="1">
        <name>Zn(2+)</name>
        <dbReference type="ChEBI" id="CHEBI:29105"/>
    </cofactor>
    <text evidence="1">Binds 1 zinc ion per subunit.</text>
</comment>
<comment type="subcellular location">
    <subcellularLocation>
        <location evidence="1">Cytoplasm</location>
    </subcellularLocation>
</comment>
<comment type="domain">
    <text evidence="1">Consists of three domains; the N-terminal catalytic domain, the editing domain and the C-terminal C-Ala domain. The editing domain removes incorrectly charged amino acids, while the C-Ala domain, along with tRNA(Ala), serves as a bridge to cooperatively bring together the editing and aminoacylation centers thus stimulating deacylation of misacylated tRNAs.</text>
</comment>
<comment type="similarity">
    <text evidence="1">Belongs to the class-II aminoacyl-tRNA synthetase family.</text>
</comment>
<evidence type="ECO:0000255" key="1">
    <source>
        <dbReference type="HAMAP-Rule" id="MF_00036"/>
    </source>
</evidence>
<dbReference type="EC" id="6.1.1.7" evidence="1"/>
<dbReference type="EMBL" id="CP000931">
    <property type="protein sequence ID" value="ABZ75802.1"/>
    <property type="molecule type" value="Genomic_DNA"/>
</dbReference>
<dbReference type="RefSeq" id="WP_012276344.1">
    <property type="nucleotide sequence ID" value="NC_010334.1"/>
</dbReference>
<dbReference type="SMR" id="B0TK15"/>
<dbReference type="STRING" id="458817.Shal_1233"/>
<dbReference type="KEGG" id="shl:Shal_1233"/>
<dbReference type="eggNOG" id="COG0013">
    <property type="taxonomic scope" value="Bacteria"/>
</dbReference>
<dbReference type="HOGENOM" id="CLU_004485_1_1_6"/>
<dbReference type="OrthoDB" id="9803884at2"/>
<dbReference type="Proteomes" id="UP000001317">
    <property type="component" value="Chromosome"/>
</dbReference>
<dbReference type="GO" id="GO:0005829">
    <property type="term" value="C:cytosol"/>
    <property type="evidence" value="ECO:0007669"/>
    <property type="project" value="TreeGrafter"/>
</dbReference>
<dbReference type="GO" id="GO:0004813">
    <property type="term" value="F:alanine-tRNA ligase activity"/>
    <property type="evidence" value="ECO:0007669"/>
    <property type="project" value="UniProtKB-UniRule"/>
</dbReference>
<dbReference type="GO" id="GO:0002161">
    <property type="term" value="F:aminoacyl-tRNA deacylase activity"/>
    <property type="evidence" value="ECO:0007669"/>
    <property type="project" value="TreeGrafter"/>
</dbReference>
<dbReference type="GO" id="GO:0005524">
    <property type="term" value="F:ATP binding"/>
    <property type="evidence" value="ECO:0007669"/>
    <property type="project" value="UniProtKB-UniRule"/>
</dbReference>
<dbReference type="GO" id="GO:0000049">
    <property type="term" value="F:tRNA binding"/>
    <property type="evidence" value="ECO:0007669"/>
    <property type="project" value="UniProtKB-KW"/>
</dbReference>
<dbReference type="GO" id="GO:0008270">
    <property type="term" value="F:zinc ion binding"/>
    <property type="evidence" value="ECO:0007669"/>
    <property type="project" value="UniProtKB-UniRule"/>
</dbReference>
<dbReference type="GO" id="GO:0006419">
    <property type="term" value="P:alanyl-tRNA aminoacylation"/>
    <property type="evidence" value="ECO:0007669"/>
    <property type="project" value="UniProtKB-UniRule"/>
</dbReference>
<dbReference type="GO" id="GO:0045892">
    <property type="term" value="P:negative regulation of DNA-templated transcription"/>
    <property type="evidence" value="ECO:0007669"/>
    <property type="project" value="TreeGrafter"/>
</dbReference>
<dbReference type="CDD" id="cd00673">
    <property type="entry name" value="AlaRS_core"/>
    <property type="match status" value="1"/>
</dbReference>
<dbReference type="FunFam" id="2.40.30.130:FF:000001">
    <property type="entry name" value="Alanine--tRNA ligase"/>
    <property type="match status" value="1"/>
</dbReference>
<dbReference type="FunFam" id="3.10.310.40:FF:000001">
    <property type="entry name" value="Alanine--tRNA ligase"/>
    <property type="match status" value="1"/>
</dbReference>
<dbReference type="FunFam" id="3.30.54.20:FF:000001">
    <property type="entry name" value="Alanine--tRNA ligase"/>
    <property type="match status" value="1"/>
</dbReference>
<dbReference type="FunFam" id="3.30.930.10:FF:000004">
    <property type="entry name" value="Alanine--tRNA ligase"/>
    <property type="match status" value="1"/>
</dbReference>
<dbReference type="FunFam" id="3.30.980.10:FF:000004">
    <property type="entry name" value="Alanine--tRNA ligase, cytoplasmic"/>
    <property type="match status" value="1"/>
</dbReference>
<dbReference type="Gene3D" id="2.40.30.130">
    <property type="match status" value="1"/>
</dbReference>
<dbReference type="Gene3D" id="3.10.310.40">
    <property type="match status" value="1"/>
</dbReference>
<dbReference type="Gene3D" id="3.30.54.20">
    <property type="match status" value="1"/>
</dbReference>
<dbReference type="Gene3D" id="6.10.250.550">
    <property type="match status" value="1"/>
</dbReference>
<dbReference type="Gene3D" id="3.30.930.10">
    <property type="entry name" value="Bira Bifunctional Protein, Domain 2"/>
    <property type="match status" value="1"/>
</dbReference>
<dbReference type="Gene3D" id="3.30.980.10">
    <property type="entry name" value="Threonyl-trna Synthetase, Chain A, domain 2"/>
    <property type="match status" value="1"/>
</dbReference>
<dbReference type="HAMAP" id="MF_00036_B">
    <property type="entry name" value="Ala_tRNA_synth_B"/>
    <property type="match status" value="1"/>
</dbReference>
<dbReference type="InterPro" id="IPR045864">
    <property type="entry name" value="aa-tRNA-synth_II/BPL/LPL"/>
</dbReference>
<dbReference type="InterPro" id="IPR002318">
    <property type="entry name" value="Ala-tRNA-lgiase_IIc"/>
</dbReference>
<dbReference type="InterPro" id="IPR018162">
    <property type="entry name" value="Ala-tRNA-ligase_IIc_anticod-bd"/>
</dbReference>
<dbReference type="InterPro" id="IPR018165">
    <property type="entry name" value="Ala-tRNA-synth_IIc_core"/>
</dbReference>
<dbReference type="InterPro" id="IPR018164">
    <property type="entry name" value="Ala-tRNA-synth_IIc_N"/>
</dbReference>
<dbReference type="InterPro" id="IPR050058">
    <property type="entry name" value="Ala-tRNA_ligase"/>
</dbReference>
<dbReference type="InterPro" id="IPR023033">
    <property type="entry name" value="Ala_tRNA_ligase_euk/bac"/>
</dbReference>
<dbReference type="InterPro" id="IPR003156">
    <property type="entry name" value="DHHA1_dom"/>
</dbReference>
<dbReference type="InterPro" id="IPR018163">
    <property type="entry name" value="Thr/Ala-tRNA-synth_IIc_edit"/>
</dbReference>
<dbReference type="InterPro" id="IPR009000">
    <property type="entry name" value="Transl_B-barrel_sf"/>
</dbReference>
<dbReference type="InterPro" id="IPR012947">
    <property type="entry name" value="tRNA_SAD"/>
</dbReference>
<dbReference type="NCBIfam" id="TIGR00344">
    <property type="entry name" value="alaS"/>
    <property type="match status" value="1"/>
</dbReference>
<dbReference type="PANTHER" id="PTHR11777:SF9">
    <property type="entry name" value="ALANINE--TRNA LIGASE, CYTOPLASMIC"/>
    <property type="match status" value="1"/>
</dbReference>
<dbReference type="PANTHER" id="PTHR11777">
    <property type="entry name" value="ALANYL-TRNA SYNTHETASE"/>
    <property type="match status" value="1"/>
</dbReference>
<dbReference type="Pfam" id="PF02272">
    <property type="entry name" value="DHHA1"/>
    <property type="match status" value="1"/>
</dbReference>
<dbReference type="Pfam" id="PF01411">
    <property type="entry name" value="tRNA-synt_2c"/>
    <property type="match status" value="1"/>
</dbReference>
<dbReference type="Pfam" id="PF07973">
    <property type="entry name" value="tRNA_SAD"/>
    <property type="match status" value="1"/>
</dbReference>
<dbReference type="PRINTS" id="PR00980">
    <property type="entry name" value="TRNASYNTHALA"/>
</dbReference>
<dbReference type="SMART" id="SM00863">
    <property type="entry name" value="tRNA_SAD"/>
    <property type="match status" value="1"/>
</dbReference>
<dbReference type="SUPFAM" id="SSF55681">
    <property type="entry name" value="Class II aaRS and biotin synthetases"/>
    <property type="match status" value="1"/>
</dbReference>
<dbReference type="SUPFAM" id="SSF101353">
    <property type="entry name" value="Putative anticodon-binding domain of alanyl-tRNA synthetase (AlaRS)"/>
    <property type="match status" value="1"/>
</dbReference>
<dbReference type="SUPFAM" id="SSF55186">
    <property type="entry name" value="ThrRS/AlaRS common domain"/>
    <property type="match status" value="1"/>
</dbReference>
<dbReference type="SUPFAM" id="SSF50447">
    <property type="entry name" value="Translation proteins"/>
    <property type="match status" value="1"/>
</dbReference>
<dbReference type="PROSITE" id="PS50860">
    <property type="entry name" value="AA_TRNA_LIGASE_II_ALA"/>
    <property type="match status" value="1"/>
</dbReference>
<reference key="1">
    <citation type="submission" date="2008-01" db="EMBL/GenBank/DDBJ databases">
        <title>Complete sequence of Shewanella halifaxensis HAW-EB4.</title>
        <authorList>
            <consortium name="US DOE Joint Genome Institute"/>
            <person name="Copeland A."/>
            <person name="Lucas S."/>
            <person name="Lapidus A."/>
            <person name="Glavina del Rio T."/>
            <person name="Dalin E."/>
            <person name="Tice H."/>
            <person name="Bruce D."/>
            <person name="Goodwin L."/>
            <person name="Pitluck S."/>
            <person name="Sims D."/>
            <person name="Brettin T."/>
            <person name="Detter J.C."/>
            <person name="Han C."/>
            <person name="Kuske C.R."/>
            <person name="Schmutz J."/>
            <person name="Larimer F."/>
            <person name="Land M."/>
            <person name="Hauser L."/>
            <person name="Kyrpides N."/>
            <person name="Kim E."/>
            <person name="Zhao J.-S."/>
            <person name="Richardson P."/>
        </authorList>
    </citation>
    <scope>NUCLEOTIDE SEQUENCE [LARGE SCALE GENOMIC DNA]</scope>
    <source>
        <strain>HAW-EB4</strain>
    </source>
</reference>
<proteinExistence type="inferred from homology"/>
<organism>
    <name type="scientific">Shewanella halifaxensis (strain HAW-EB4)</name>
    <dbReference type="NCBI Taxonomy" id="458817"/>
    <lineage>
        <taxon>Bacteria</taxon>
        <taxon>Pseudomonadati</taxon>
        <taxon>Pseudomonadota</taxon>
        <taxon>Gammaproteobacteria</taxon>
        <taxon>Alteromonadales</taxon>
        <taxon>Shewanellaceae</taxon>
        <taxon>Shewanella</taxon>
    </lineage>
</organism>
<keyword id="KW-0030">Aminoacyl-tRNA synthetase</keyword>
<keyword id="KW-0067">ATP-binding</keyword>
<keyword id="KW-0963">Cytoplasm</keyword>
<keyword id="KW-0436">Ligase</keyword>
<keyword id="KW-0479">Metal-binding</keyword>
<keyword id="KW-0547">Nucleotide-binding</keyword>
<keyword id="KW-0648">Protein biosynthesis</keyword>
<keyword id="KW-0694">RNA-binding</keyword>
<keyword id="KW-0820">tRNA-binding</keyword>
<keyword id="KW-0862">Zinc</keyword>
<feature type="chain" id="PRO_0000347786" description="Alanine--tRNA ligase">
    <location>
        <begin position="1"/>
        <end position="874"/>
    </location>
</feature>
<feature type="binding site" evidence="1">
    <location>
        <position position="562"/>
    </location>
    <ligand>
        <name>Zn(2+)</name>
        <dbReference type="ChEBI" id="CHEBI:29105"/>
    </ligand>
</feature>
<feature type="binding site" evidence="1">
    <location>
        <position position="566"/>
    </location>
    <ligand>
        <name>Zn(2+)</name>
        <dbReference type="ChEBI" id="CHEBI:29105"/>
    </ligand>
</feature>
<feature type="binding site" evidence="1">
    <location>
        <position position="664"/>
    </location>
    <ligand>
        <name>Zn(2+)</name>
        <dbReference type="ChEBI" id="CHEBI:29105"/>
    </ligand>
</feature>
<feature type="binding site" evidence="1">
    <location>
        <position position="668"/>
    </location>
    <ligand>
        <name>Zn(2+)</name>
        <dbReference type="ChEBI" id="CHEBI:29105"/>
    </ligand>
</feature>